<gene>
    <name evidence="1" type="primary">secA</name>
    <name type="ordered locus">NMB1536</name>
</gene>
<evidence type="ECO:0000255" key="1">
    <source>
        <dbReference type="HAMAP-Rule" id="MF_01382"/>
    </source>
</evidence>
<protein>
    <recommendedName>
        <fullName evidence="1">Protein translocase subunit SecA</fullName>
        <ecNumber evidence="1">7.4.2.8</ecNumber>
    </recommendedName>
</protein>
<proteinExistence type="inferred from homology"/>
<organism>
    <name type="scientific">Neisseria meningitidis serogroup B (strain ATCC BAA-335 / MC58)</name>
    <dbReference type="NCBI Taxonomy" id="122586"/>
    <lineage>
        <taxon>Bacteria</taxon>
        <taxon>Pseudomonadati</taxon>
        <taxon>Pseudomonadota</taxon>
        <taxon>Betaproteobacteria</taxon>
        <taxon>Neisseriales</taxon>
        <taxon>Neisseriaceae</taxon>
        <taxon>Neisseria</taxon>
    </lineage>
</organism>
<accession>Q9JYK8</accession>
<name>SECA_NEIMB</name>
<feature type="chain" id="PRO_0000320863" description="Protein translocase subunit SecA">
    <location>
        <begin position="1"/>
        <end position="916"/>
    </location>
</feature>
<feature type="binding site" evidence="1">
    <location>
        <position position="87"/>
    </location>
    <ligand>
        <name>ATP</name>
        <dbReference type="ChEBI" id="CHEBI:30616"/>
    </ligand>
</feature>
<feature type="binding site" evidence="1">
    <location>
        <begin position="105"/>
        <end position="109"/>
    </location>
    <ligand>
        <name>ATP</name>
        <dbReference type="ChEBI" id="CHEBI:30616"/>
    </ligand>
</feature>
<feature type="binding site" evidence="1">
    <location>
        <position position="507"/>
    </location>
    <ligand>
        <name>ATP</name>
        <dbReference type="ChEBI" id="CHEBI:30616"/>
    </ligand>
</feature>
<feature type="binding site" evidence="1">
    <location>
        <position position="900"/>
    </location>
    <ligand>
        <name>Zn(2+)</name>
        <dbReference type="ChEBI" id="CHEBI:29105"/>
    </ligand>
</feature>
<feature type="binding site" evidence="1">
    <location>
        <position position="902"/>
    </location>
    <ligand>
        <name>Zn(2+)</name>
        <dbReference type="ChEBI" id="CHEBI:29105"/>
    </ligand>
</feature>
<feature type="binding site" evidence="1">
    <location>
        <position position="911"/>
    </location>
    <ligand>
        <name>Zn(2+)</name>
        <dbReference type="ChEBI" id="CHEBI:29105"/>
    </ligand>
</feature>
<feature type="binding site" evidence="1">
    <location>
        <position position="912"/>
    </location>
    <ligand>
        <name>Zn(2+)</name>
        <dbReference type="ChEBI" id="CHEBI:29105"/>
    </ligand>
</feature>
<sequence length="916" mass="103294">MLTNIAKKIFGSRNDRLLKQYRKSVARINALEEQMQALSDADLQAKTAEFKQRLADGQTLDGILPEAFAVCREASRRTLGMRHFDVQLIGGMVLHDGKIAEMRTGEGKTLVATLAVYLNALAGKGVHVVTVNDYLASRDAGIMEPLYNFLGLTVGVIISDMQPFDRQNAYAADITYGTNNEFGFDYLRDNMVTDQYDKVQRELNFAVVDEVDSILIDEARTPLIISGQADDNIQLYQIMNTVPPHLVRQETEEGEGDYWVDEKAHQVILSEAGHEHAEQILTQMGLLAENDSLYSAANIALMHHLMAALRAHSLFHKDQHYVIQDGEIVIVDEFTGRLMSGRRWSEGLHQAVEAKEGVEIKRENQTLASITFQNYFRLYTKLSGMTGTADTEAFEFQSIYNLETVIIPTNRPVQRKDFNDQIFRSAEEKFEAVVKDIEECHKRGQPVLVGTTSIENSELVSKLLTQAGLPHNVLNAKEHEREALIVAQAGKVGAITVATNMAGRGTDIVLGGNLKHQTDAIRADETLSDEEKQAQIAALEDGWQAEHDKVMEAGGLHIIGTERHESRRIDNQLRGRSGRQGDPGSSRFYLSFEDPLLRLFALDRAAAILNRLAPERGVAIEHNLLTRQIEGAQRKVEGRNFDMRKQVLEYDDVANEQRKVIYSQRNEILTSKDISDLMQEIRSDVVSDLVDTYMPPDSMEEQWDIPTLENRLAAEFRLHEDIQSWLKADNAIDGQDIKERLIERIENEYAAKTELVGKQAMADFERNVMLQVIDNQWREHLAAMDYLRQGIHLRSYAQKNPKQEYKREAFTMFQDLWNGIKFHIASLLTSVQIEQNPVAVVEEQPIGNIQSIHSESPDMEELLGQSQTDLVTEAFNPDGTDFSPEALEARGQIVHRNDPCPCGSGLKYKQCHGKLA</sequence>
<reference key="1">
    <citation type="journal article" date="2000" name="Science">
        <title>Complete genome sequence of Neisseria meningitidis serogroup B strain MC58.</title>
        <authorList>
            <person name="Tettelin H."/>
            <person name="Saunders N.J."/>
            <person name="Heidelberg J.F."/>
            <person name="Jeffries A.C."/>
            <person name="Nelson K.E."/>
            <person name="Eisen J.A."/>
            <person name="Ketchum K.A."/>
            <person name="Hood D.W."/>
            <person name="Peden J.F."/>
            <person name="Dodson R.J."/>
            <person name="Nelson W.C."/>
            <person name="Gwinn M.L."/>
            <person name="DeBoy R.T."/>
            <person name="Peterson J.D."/>
            <person name="Hickey E.K."/>
            <person name="Haft D.H."/>
            <person name="Salzberg S.L."/>
            <person name="White O."/>
            <person name="Fleischmann R.D."/>
            <person name="Dougherty B.A."/>
            <person name="Mason T.M."/>
            <person name="Ciecko A."/>
            <person name="Parksey D.S."/>
            <person name="Blair E."/>
            <person name="Cittone H."/>
            <person name="Clark E.B."/>
            <person name="Cotton M.D."/>
            <person name="Utterback T.R."/>
            <person name="Khouri H.M."/>
            <person name="Qin H."/>
            <person name="Vamathevan J.J."/>
            <person name="Gill J."/>
            <person name="Scarlato V."/>
            <person name="Masignani V."/>
            <person name="Pizza M."/>
            <person name="Grandi G."/>
            <person name="Sun L."/>
            <person name="Smith H.O."/>
            <person name="Fraser C.M."/>
            <person name="Moxon E.R."/>
            <person name="Rappuoli R."/>
            <person name="Venter J.C."/>
        </authorList>
    </citation>
    <scope>NUCLEOTIDE SEQUENCE [LARGE SCALE GENOMIC DNA]</scope>
    <source>
        <strain>ATCC BAA-335 / MC58</strain>
    </source>
</reference>
<comment type="function">
    <text evidence="1">Part of the Sec protein translocase complex. Interacts with the SecYEG preprotein conducting channel. Has a central role in coupling the hydrolysis of ATP to the transfer of proteins into and across the cell membrane, serving both as a receptor for the preprotein-SecB complex and as an ATP-driven molecular motor driving the stepwise translocation of polypeptide chains across the membrane.</text>
</comment>
<comment type="catalytic activity">
    <reaction evidence="1">
        <text>ATP + H2O + cellular proteinSide 1 = ADP + phosphate + cellular proteinSide 2.</text>
        <dbReference type="EC" id="7.4.2.8"/>
    </reaction>
</comment>
<comment type="cofactor">
    <cofactor evidence="1">
        <name>Zn(2+)</name>
        <dbReference type="ChEBI" id="CHEBI:29105"/>
    </cofactor>
    <text evidence="1">May bind 1 zinc ion per subunit.</text>
</comment>
<comment type="subunit">
    <text evidence="1">Monomer and homodimer. Part of the essential Sec protein translocation apparatus which comprises SecA, SecYEG and auxiliary proteins SecDF-YajC and YidC.</text>
</comment>
<comment type="subcellular location">
    <subcellularLocation>
        <location evidence="1">Cell inner membrane</location>
        <topology evidence="1">Peripheral membrane protein</topology>
        <orientation evidence="1">Cytoplasmic side</orientation>
    </subcellularLocation>
    <subcellularLocation>
        <location evidence="1">Cytoplasm</location>
    </subcellularLocation>
    <text evidence="1">Distribution is 50-50.</text>
</comment>
<comment type="similarity">
    <text evidence="1">Belongs to the SecA family.</text>
</comment>
<dbReference type="EC" id="7.4.2.8" evidence="1"/>
<dbReference type="EMBL" id="AE002098">
    <property type="protein sequence ID" value="AAF41891.1"/>
    <property type="molecule type" value="Genomic_DNA"/>
</dbReference>
<dbReference type="PIR" id="D81072">
    <property type="entry name" value="D81072"/>
</dbReference>
<dbReference type="RefSeq" id="NP_274543.1">
    <property type="nucleotide sequence ID" value="NC_003112.2"/>
</dbReference>
<dbReference type="RefSeq" id="WP_002225053.1">
    <property type="nucleotide sequence ID" value="NC_003112.2"/>
</dbReference>
<dbReference type="SMR" id="Q9JYK8"/>
<dbReference type="FunCoup" id="Q9JYK8">
    <property type="interactions" value="550"/>
</dbReference>
<dbReference type="STRING" id="122586.NMB1536"/>
<dbReference type="PaxDb" id="122586-NMB1536"/>
<dbReference type="KEGG" id="nme:NMB1536"/>
<dbReference type="PATRIC" id="fig|122586.8.peg.1947"/>
<dbReference type="HOGENOM" id="CLU_005314_3_0_4"/>
<dbReference type="InParanoid" id="Q9JYK8"/>
<dbReference type="OrthoDB" id="9805579at2"/>
<dbReference type="Proteomes" id="UP000000425">
    <property type="component" value="Chromosome"/>
</dbReference>
<dbReference type="GO" id="GO:0031522">
    <property type="term" value="C:cell envelope Sec protein transport complex"/>
    <property type="evidence" value="ECO:0000318"/>
    <property type="project" value="GO_Central"/>
</dbReference>
<dbReference type="GO" id="GO:0005737">
    <property type="term" value="C:cytoplasm"/>
    <property type="evidence" value="ECO:0007669"/>
    <property type="project" value="UniProtKB-SubCell"/>
</dbReference>
<dbReference type="GO" id="GO:0005886">
    <property type="term" value="C:plasma membrane"/>
    <property type="evidence" value="ECO:0000318"/>
    <property type="project" value="GO_Central"/>
</dbReference>
<dbReference type="GO" id="GO:0005524">
    <property type="term" value="F:ATP binding"/>
    <property type="evidence" value="ECO:0000318"/>
    <property type="project" value="GO_Central"/>
</dbReference>
<dbReference type="GO" id="GO:0046872">
    <property type="term" value="F:metal ion binding"/>
    <property type="evidence" value="ECO:0007669"/>
    <property type="project" value="UniProtKB-KW"/>
</dbReference>
<dbReference type="GO" id="GO:0008564">
    <property type="term" value="F:protein-exporting ATPase activity"/>
    <property type="evidence" value="ECO:0007669"/>
    <property type="project" value="UniProtKB-EC"/>
</dbReference>
<dbReference type="GO" id="GO:0065002">
    <property type="term" value="P:intracellular protein transmembrane transport"/>
    <property type="evidence" value="ECO:0007669"/>
    <property type="project" value="UniProtKB-UniRule"/>
</dbReference>
<dbReference type="GO" id="GO:0017038">
    <property type="term" value="P:protein import"/>
    <property type="evidence" value="ECO:0007669"/>
    <property type="project" value="InterPro"/>
</dbReference>
<dbReference type="GO" id="GO:0006605">
    <property type="term" value="P:protein targeting"/>
    <property type="evidence" value="ECO:0007669"/>
    <property type="project" value="UniProtKB-UniRule"/>
</dbReference>
<dbReference type="GO" id="GO:0043952">
    <property type="term" value="P:protein transport by the Sec complex"/>
    <property type="evidence" value="ECO:0000318"/>
    <property type="project" value="GO_Central"/>
</dbReference>
<dbReference type="CDD" id="cd17928">
    <property type="entry name" value="DEXDc_SecA"/>
    <property type="match status" value="1"/>
</dbReference>
<dbReference type="CDD" id="cd18803">
    <property type="entry name" value="SF2_C_secA"/>
    <property type="match status" value="1"/>
</dbReference>
<dbReference type="FunFam" id="3.40.50.300:FF:000113">
    <property type="entry name" value="Preprotein translocase subunit SecA"/>
    <property type="match status" value="1"/>
</dbReference>
<dbReference type="FunFam" id="3.90.1440.10:FF:000001">
    <property type="entry name" value="Preprotein translocase subunit SecA"/>
    <property type="match status" value="1"/>
</dbReference>
<dbReference type="FunFam" id="1.10.3060.10:FF:000003">
    <property type="entry name" value="Protein translocase subunit SecA"/>
    <property type="match status" value="1"/>
</dbReference>
<dbReference type="FunFam" id="3.40.50.300:FF:000334">
    <property type="entry name" value="Protein translocase subunit SecA"/>
    <property type="match status" value="1"/>
</dbReference>
<dbReference type="Gene3D" id="1.10.3060.10">
    <property type="entry name" value="Helical scaffold and wing domains of SecA"/>
    <property type="match status" value="1"/>
</dbReference>
<dbReference type="Gene3D" id="3.40.50.300">
    <property type="entry name" value="P-loop containing nucleotide triphosphate hydrolases"/>
    <property type="match status" value="2"/>
</dbReference>
<dbReference type="Gene3D" id="3.90.1440.10">
    <property type="entry name" value="SecA, preprotein cross-linking domain"/>
    <property type="match status" value="1"/>
</dbReference>
<dbReference type="HAMAP" id="MF_01382">
    <property type="entry name" value="SecA"/>
    <property type="match status" value="1"/>
</dbReference>
<dbReference type="InterPro" id="IPR014001">
    <property type="entry name" value="Helicase_ATP-bd"/>
</dbReference>
<dbReference type="InterPro" id="IPR001650">
    <property type="entry name" value="Helicase_C-like"/>
</dbReference>
<dbReference type="InterPro" id="IPR027417">
    <property type="entry name" value="P-loop_NTPase"/>
</dbReference>
<dbReference type="InterPro" id="IPR004027">
    <property type="entry name" value="SEC_C_motif"/>
</dbReference>
<dbReference type="InterPro" id="IPR000185">
    <property type="entry name" value="SecA"/>
</dbReference>
<dbReference type="InterPro" id="IPR020937">
    <property type="entry name" value="SecA_CS"/>
</dbReference>
<dbReference type="InterPro" id="IPR011115">
    <property type="entry name" value="SecA_DEAD"/>
</dbReference>
<dbReference type="InterPro" id="IPR014018">
    <property type="entry name" value="SecA_motor_DEAD"/>
</dbReference>
<dbReference type="InterPro" id="IPR011130">
    <property type="entry name" value="SecA_preprotein_X-link_dom"/>
</dbReference>
<dbReference type="InterPro" id="IPR044722">
    <property type="entry name" value="SecA_SF2_C"/>
</dbReference>
<dbReference type="InterPro" id="IPR011116">
    <property type="entry name" value="SecA_Wing/Scaffold"/>
</dbReference>
<dbReference type="InterPro" id="IPR036266">
    <property type="entry name" value="SecA_Wing/Scaffold_sf"/>
</dbReference>
<dbReference type="InterPro" id="IPR036670">
    <property type="entry name" value="SecA_X-link_sf"/>
</dbReference>
<dbReference type="NCBIfam" id="NF009538">
    <property type="entry name" value="PRK12904.1"/>
    <property type="match status" value="1"/>
</dbReference>
<dbReference type="NCBIfam" id="TIGR00963">
    <property type="entry name" value="secA"/>
    <property type="match status" value="1"/>
</dbReference>
<dbReference type="PANTHER" id="PTHR30612:SF0">
    <property type="entry name" value="CHLOROPLAST PROTEIN-TRANSPORTING ATPASE"/>
    <property type="match status" value="1"/>
</dbReference>
<dbReference type="PANTHER" id="PTHR30612">
    <property type="entry name" value="SECA INNER MEMBRANE COMPONENT OF SEC PROTEIN SECRETION SYSTEM"/>
    <property type="match status" value="1"/>
</dbReference>
<dbReference type="Pfam" id="PF21090">
    <property type="entry name" value="P-loop_SecA"/>
    <property type="match status" value="1"/>
</dbReference>
<dbReference type="Pfam" id="PF02810">
    <property type="entry name" value="SEC-C"/>
    <property type="match status" value="1"/>
</dbReference>
<dbReference type="Pfam" id="PF07517">
    <property type="entry name" value="SecA_DEAD"/>
    <property type="match status" value="1"/>
</dbReference>
<dbReference type="Pfam" id="PF01043">
    <property type="entry name" value="SecA_PP_bind"/>
    <property type="match status" value="1"/>
</dbReference>
<dbReference type="Pfam" id="PF07516">
    <property type="entry name" value="SecA_SW"/>
    <property type="match status" value="1"/>
</dbReference>
<dbReference type="PRINTS" id="PR00906">
    <property type="entry name" value="SECA"/>
</dbReference>
<dbReference type="SMART" id="SM00957">
    <property type="entry name" value="SecA_DEAD"/>
    <property type="match status" value="1"/>
</dbReference>
<dbReference type="SMART" id="SM00958">
    <property type="entry name" value="SecA_PP_bind"/>
    <property type="match status" value="1"/>
</dbReference>
<dbReference type="SUPFAM" id="SSF81886">
    <property type="entry name" value="Helical scaffold and wing domains of SecA"/>
    <property type="match status" value="1"/>
</dbReference>
<dbReference type="SUPFAM" id="SSF52540">
    <property type="entry name" value="P-loop containing nucleoside triphosphate hydrolases"/>
    <property type="match status" value="2"/>
</dbReference>
<dbReference type="SUPFAM" id="SSF81767">
    <property type="entry name" value="Pre-protein crosslinking domain of SecA"/>
    <property type="match status" value="1"/>
</dbReference>
<dbReference type="PROSITE" id="PS01312">
    <property type="entry name" value="SECA"/>
    <property type="match status" value="1"/>
</dbReference>
<dbReference type="PROSITE" id="PS51196">
    <property type="entry name" value="SECA_MOTOR_DEAD"/>
    <property type="match status" value="1"/>
</dbReference>
<keyword id="KW-0067">ATP-binding</keyword>
<keyword id="KW-0997">Cell inner membrane</keyword>
<keyword id="KW-1003">Cell membrane</keyword>
<keyword id="KW-0963">Cytoplasm</keyword>
<keyword id="KW-0472">Membrane</keyword>
<keyword id="KW-0479">Metal-binding</keyword>
<keyword id="KW-0547">Nucleotide-binding</keyword>
<keyword id="KW-0653">Protein transport</keyword>
<keyword id="KW-1185">Reference proteome</keyword>
<keyword id="KW-1278">Translocase</keyword>
<keyword id="KW-0811">Translocation</keyword>
<keyword id="KW-0813">Transport</keyword>
<keyword id="KW-0862">Zinc</keyword>